<organism>
    <name type="scientific">Homo sapiens</name>
    <name type="common">Human</name>
    <dbReference type="NCBI Taxonomy" id="9606"/>
    <lineage>
        <taxon>Eukaryota</taxon>
        <taxon>Metazoa</taxon>
        <taxon>Chordata</taxon>
        <taxon>Craniata</taxon>
        <taxon>Vertebrata</taxon>
        <taxon>Euteleostomi</taxon>
        <taxon>Mammalia</taxon>
        <taxon>Eutheria</taxon>
        <taxon>Euarchontoglires</taxon>
        <taxon>Primates</taxon>
        <taxon>Haplorrhini</taxon>
        <taxon>Catarrhini</taxon>
        <taxon>Hominidae</taxon>
        <taxon>Homo</taxon>
    </lineage>
</organism>
<proteinExistence type="evidence at protein level"/>
<comment type="function">
    <text evidence="2">Receptor for netrin required for axon guidance. Functions in the netrin signaling pathway and promotes neurite outgrowth in response to NTN1. Mediates axon repulsion of neuronal growth cones in the developing nervous system in response to netrin. Axon repulsion in growth cones may be mediated by its association with DCC that may trigger signaling for repulsion. It also acts as a dependence receptor required for apoptosis induction when not associated with netrin ligand.</text>
</comment>
<comment type="subunit">
    <text evidence="2 3 9">Homodimer and homooligomer. Interacts with the cytoplasmic part of DCC. Interacts with MAGED1. Interacts with PRKCABP, possibly mediating some interaction with PKC (By similarity). Interacts (via extracellular domain) with FLRT2 (via extracellular domain) (PubMed:25374360). Interacts (via extracellular domain) with FLRT3 (via extracellular domain) (By similarity).</text>
</comment>
<comment type="subcellular location">
    <subcellularLocation>
        <location evidence="2">Cell membrane</location>
        <topology evidence="2">Single-pass type I membrane protein</topology>
    </subcellularLocation>
    <subcellularLocation>
        <location evidence="2">Membrane raft</location>
    </subcellularLocation>
    <subcellularLocation>
        <location evidence="2">Cell projection</location>
        <location evidence="2">Neuron projection</location>
    </subcellularLocation>
    <text evidence="2">The interaction with PRKCABP regulates its surface expression and leads to its removal from the surface of neurons and growth cones.</text>
</comment>
<comment type="alternative products">
    <event type="alternative splicing"/>
    <isoform>
        <id>Q6ZN44-1</id>
        <name>1</name>
        <sequence type="displayed"/>
    </isoform>
    <isoform>
        <id>Q6ZN44-2</id>
        <name>2</name>
        <sequence type="described" ref="VSP_011694 VSP_011695"/>
    </isoform>
    <isoform>
        <id>Q6ZN44-3</id>
        <name>3</name>
        <sequence type="described" ref="VSP_011693"/>
    </isoform>
</comment>
<comment type="induction">
    <text evidence="7">By p53/TP53.</text>
</comment>
<comment type="domain">
    <text evidence="2">The ZU5 domain mediates the interaction with MAGED1, which participates in the induction of apoptosis.</text>
</comment>
<comment type="PTM">
    <text evidence="1 2">Phosphorylated on cytoplasmic tyrosine residues (By similarity). Phosphorylated by PKC in vitro (By similarity).</text>
</comment>
<comment type="PTM">
    <text evidence="2">Proteolytically cleaved by caspases during apoptosis. The cleavage does not take place when the receptor is associated with netrin ligand. Its cleavage by caspases is required to induce apoptosis.</text>
</comment>
<comment type="PTM">
    <text evidence="3">The two extracellular TSRs of UNC5A contain WxxWxxWxxC motifs that can be C-mannosylated on all tryptophans. DPY19L1 preferentially mannosylates the first two tryptophans and DPY19L3 prefers the third. C-mannosylation by DPY19L1 is required for transport of UNC5A from the endoplasmic reticulum to the cell surface.</text>
</comment>
<comment type="miscellaneous">
    <text evidence="8">Down-regulated in multiple cancers including colorectal, breast, ovary, uterus, stomach, lung, or kidney cancers.</text>
</comment>
<comment type="similarity">
    <text evidence="12">Belongs to the unc-5 family.</text>
</comment>
<comment type="sequence caution" evidence="12">
    <conflict type="miscellaneous discrepancy">
        <sequence resource="EMBL-CDS" id="BAB85562"/>
    </conflict>
    <text>Intron retention.</text>
</comment>
<evidence type="ECO:0000250" key="1"/>
<evidence type="ECO:0000250" key="2">
    <source>
        <dbReference type="UniProtKB" id="O08721"/>
    </source>
</evidence>
<evidence type="ECO:0000250" key="3">
    <source>
        <dbReference type="UniProtKB" id="Q8K1S4"/>
    </source>
</evidence>
<evidence type="ECO:0000255" key="4"/>
<evidence type="ECO:0000255" key="5">
    <source>
        <dbReference type="PROSITE-ProRule" id="PRU00210"/>
    </source>
</evidence>
<evidence type="ECO:0000255" key="6">
    <source>
        <dbReference type="PROSITE-ProRule" id="PRU00485"/>
    </source>
</evidence>
<evidence type="ECO:0000269" key="7">
    <source>
    </source>
</evidence>
<evidence type="ECO:0000269" key="8">
    <source>
    </source>
</evidence>
<evidence type="ECO:0000269" key="9">
    <source>
    </source>
</evidence>
<evidence type="ECO:0000303" key="10">
    <source>
    </source>
</evidence>
<evidence type="ECO:0000303" key="11">
    <source>
    </source>
</evidence>
<evidence type="ECO:0000305" key="12"/>
<evidence type="ECO:0007744" key="13">
    <source>
        <dbReference type="PDB" id="4V2A"/>
    </source>
</evidence>
<evidence type="ECO:0007829" key="14">
    <source>
        <dbReference type="PDB" id="4V2A"/>
    </source>
</evidence>
<accession>Q6ZN44</accession>
<accession>B2RXE6</accession>
<accession>Q8TF26</accession>
<accession>Q96GP4</accession>
<dbReference type="EMBL" id="AK131380">
    <property type="protein sequence ID" value="BAD18531.1"/>
    <property type="molecule type" value="mRNA"/>
</dbReference>
<dbReference type="EMBL" id="AC027318">
    <property type="status" value="NOT_ANNOTATED_CDS"/>
    <property type="molecule type" value="Genomic_DNA"/>
</dbReference>
<dbReference type="EMBL" id="AC091897">
    <property type="status" value="NOT_ANNOTATED_CDS"/>
    <property type="molecule type" value="Genomic_DNA"/>
</dbReference>
<dbReference type="EMBL" id="AC091902">
    <property type="status" value="NOT_ANNOTATED_CDS"/>
    <property type="molecule type" value="Genomic_DNA"/>
</dbReference>
<dbReference type="EMBL" id="BC009333">
    <property type="protein sequence ID" value="AAH09333.2"/>
    <property type="molecule type" value="mRNA"/>
</dbReference>
<dbReference type="EMBL" id="BC033727">
    <property type="status" value="NOT_ANNOTATED_CDS"/>
    <property type="molecule type" value="mRNA"/>
</dbReference>
<dbReference type="EMBL" id="BC157824">
    <property type="protein sequence ID" value="AAI57825.1"/>
    <property type="molecule type" value="mRNA"/>
</dbReference>
<dbReference type="EMBL" id="AB075856">
    <property type="protein sequence ID" value="BAB85562.1"/>
    <property type="status" value="ALT_SEQ"/>
    <property type="molecule type" value="mRNA"/>
</dbReference>
<dbReference type="CCDS" id="CCDS34299.1">
    <molecule id="Q6ZN44-1"/>
</dbReference>
<dbReference type="RefSeq" id="NP_588610.2">
    <molecule id="Q6ZN44-1"/>
    <property type="nucleotide sequence ID" value="NM_133369.3"/>
</dbReference>
<dbReference type="PDB" id="4V2A">
    <property type="method" value="X-ray"/>
    <property type="resolution" value="2.40 A"/>
    <property type="chains" value="A=1-303"/>
</dbReference>
<dbReference type="PDBsum" id="4V2A"/>
<dbReference type="SMR" id="Q6ZN44"/>
<dbReference type="BioGRID" id="124683">
    <property type="interactions" value="11"/>
</dbReference>
<dbReference type="FunCoup" id="Q6ZN44">
    <property type="interactions" value="531"/>
</dbReference>
<dbReference type="IntAct" id="Q6ZN44">
    <property type="interactions" value="1"/>
</dbReference>
<dbReference type="STRING" id="9606.ENSP00000332737"/>
<dbReference type="GlyCosmos" id="Q6ZN44">
    <property type="glycosylation" value="3 sites, No reported glycans"/>
</dbReference>
<dbReference type="GlyGen" id="Q6ZN44">
    <property type="glycosylation" value="6 sites, 1 N-linked glycan (1 site)"/>
</dbReference>
<dbReference type="iPTMnet" id="Q6ZN44"/>
<dbReference type="PhosphoSitePlus" id="Q6ZN44"/>
<dbReference type="BioMuta" id="UNC5A"/>
<dbReference type="DMDM" id="296453000"/>
<dbReference type="jPOST" id="Q6ZN44"/>
<dbReference type="MassIVE" id="Q6ZN44"/>
<dbReference type="PaxDb" id="9606-ENSP00000332737"/>
<dbReference type="PeptideAtlas" id="Q6ZN44"/>
<dbReference type="ProteomicsDB" id="67973">
    <molecule id="Q6ZN44-1"/>
</dbReference>
<dbReference type="ProteomicsDB" id="67974">
    <molecule id="Q6ZN44-2"/>
</dbReference>
<dbReference type="ProteomicsDB" id="67975">
    <molecule id="Q6ZN44-3"/>
</dbReference>
<dbReference type="Antibodypedia" id="29143">
    <property type="antibodies" value="105 antibodies from 28 providers"/>
</dbReference>
<dbReference type="DNASU" id="90249"/>
<dbReference type="Ensembl" id="ENST00000329542.9">
    <molecule id="Q6ZN44-1"/>
    <property type="protein sequence ID" value="ENSP00000332737.4"/>
    <property type="gene ID" value="ENSG00000113763.12"/>
</dbReference>
<dbReference type="GeneID" id="90249"/>
<dbReference type="KEGG" id="hsa:90249"/>
<dbReference type="MANE-Select" id="ENST00000329542.9">
    <property type="protein sequence ID" value="ENSP00000332737.4"/>
    <property type="RefSeq nucleotide sequence ID" value="NM_133369.3"/>
    <property type="RefSeq protein sequence ID" value="NP_588610.2"/>
</dbReference>
<dbReference type="UCSC" id="uc003mey.4">
    <molecule id="Q6ZN44-1"/>
    <property type="organism name" value="human"/>
</dbReference>
<dbReference type="AGR" id="HGNC:12567"/>
<dbReference type="CTD" id="90249"/>
<dbReference type="DisGeNET" id="90249"/>
<dbReference type="GeneCards" id="UNC5A"/>
<dbReference type="HGNC" id="HGNC:12567">
    <property type="gene designation" value="UNC5A"/>
</dbReference>
<dbReference type="HPA" id="ENSG00000113763">
    <property type="expression patterns" value="Tissue enriched (brain)"/>
</dbReference>
<dbReference type="MIM" id="607869">
    <property type="type" value="gene"/>
</dbReference>
<dbReference type="neXtProt" id="NX_Q6ZN44"/>
<dbReference type="OpenTargets" id="ENSG00000113763"/>
<dbReference type="PharmGKB" id="PA37204"/>
<dbReference type="VEuPathDB" id="HostDB:ENSG00000113763"/>
<dbReference type="eggNOG" id="KOG1480">
    <property type="taxonomic scope" value="Eukaryota"/>
</dbReference>
<dbReference type="GeneTree" id="ENSGT00950000182815"/>
<dbReference type="HOGENOM" id="CLU_014383_0_0_1"/>
<dbReference type="InParanoid" id="Q6ZN44"/>
<dbReference type="OrthoDB" id="5973910at2759"/>
<dbReference type="PAN-GO" id="Q6ZN44">
    <property type="GO annotations" value="2 GO annotations based on evolutionary models"/>
</dbReference>
<dbReference type="PhylomeDB" id="Q6ZN44"/>
<dbReference type="TreeFam" id="TF316767"/>
<dbReference type="PathwayCommons" id="Q6ZN44"/>
<dbReference type="Reactome" id="R-HSA-373752">
    <property type="pathway name" value="Netrin-1 signaling"/>
</dbReference>
<dbReference type="Reactome" id="R-HSA-418886">
    <property type="pathway name" value="Netrin mediated repulsion signals"/>
</dbReference>
<dbReference type="Reactome" id="R-HSA-418889">
    <property type="pathway name" value="Caspase activation via Dependence Receptors in the absence of ligand"/>
</dbReference>
<dbReference type="SignaLink" id="Q6ZN44"/>
<dbReference type="SIGNOR" id="Q6ZN44"/>
<dbReference type="BioGRID-ORCS" id="90249">
    <property type="hits" value="14 hits in 1145 CRISPR screens"/>
</dbReference>
<dbReference type="ChiTaRS" id="UNC5A">
    <property type="organism name" value="human"/>
</dbReference>
<dbReference type="EvolutionaryTrace" id="Q6ZN44"/>
<dbReference type="GeneWiki" id="UNC5A"/>
<dbReference type="GenomeRNAi" id="90249"/>
<dbReference type="Pharos" id="Q6ZN44">
    <property type="development level" value="Tbio"/>
</dbReference>
<dbReference type="PRO" id="PR:Q6ZN44"/>
<dbReference type="Proteomes" id="UP000005640">
    <property type="component" value="Chromosome 5"/>
</dbReference>
<dbReference type="RNAct" id="Q6ZN44">
    <property type="molecule type" value="protein"/>
</dbReference>
<dbReference type="Bgee" id="ENSG00000113763">
    <property type="expression patterns" value="Expressed in endothelial cell and 98 other cell types or tissues"/>
</dbReference>
<dbReference type="ExpressionAtlas" id="Q6ZN44">
    <property type="expression patterns" value="baseline and differential"/>
</dbReference>
<dbReference type="GO" id="GO:0045121">
    <property type="term" value="C:membrane raft"/>
    <property type="evidence" value="ECO:0007669"/>
    <property type="project" value="UniProtKB-SubCell"/>
</dbReference>
<dbReference type="GO" id="GO:0032589">
    <property type="term" value="C:neuron projection membrane"/>
    <property type="evidence" value="ECO:0000250"/>
    <property type="project" value="UniProtKB"/>
</dbReference>
<dbReference type="GO" id="GO:0032809">
    <property type="term" value="C:neuronal cell body membrane"/>
    <property type="evidence" value="ECO:0000250"/>
    <property type="project" value="UniProtKB"/>
</dbReference>
<dbReference type="GO" id="GO:0005886">
    <property type="term" value="C:plasma membrane"/>
    <property type="evidence" value="ECO:0000250"/>
    <property type="project" value="UniProtKB"/>
</dbReference>
<dbReference type="GO" id="GO:0005042">
    <property type="term" value="F:netrin receptor activity"/>
    <property type="evidence" value="ECO:0000318"/>
    <property type="project" value="GO_Central"/>
</dbReference>
<dbReference type="GO" id="GO:0033564">
    <property type="term" value="P:anterior/posterior axon guidance"/>
    <property type="evidence" value="ECO:0000318"/>
    <property type="project" value="GO_Central"/>
</dbReference>
<dbReference type="GO" id="GO:0006915">
    <property type="term" value="P:apoptotic process"/>
    <property type="evidence" value="ECO:0007669"/>
    <property type="project" value="UniProtKB-KW"/>
</dbReference>
<dbReference type="GO" id="GO:0038007">
    <property type="term" value="P:netrin-activated signaling pathway"/>
    <property type="evidence" value="ECO:0000250"/>
    <property type="project" value="UniProtKB"/>
</dbReference>
<dbReference type="GO" id="GO:0031175">
    <property type="term" value="P:neuron projection development"/>
    <property type="evidence" value="ECO:0000250"/>
    <property type="project" value="UniProtKB"/>
</dbReference>
<dbReference type="CDD" id="cd08800">
    <property type="entry name" value="Death_UNC5A"/>
    <property type="match status" value="1"/>
</dbReference>
<dbReference type="FunFam" id="1.10.533.10:FF:000001">
    <property type="entry name" value="Unc-5 netrin receptor B"/>
    <property type="match status" value="1"/>
</dbReference>
<dbReference type="FunFam" id="2.20.100.10:FF:000002">
    <property type="entry name" value="Unc-5 netrin receptor C"/>
    <property type="match status" value="1"/>
</dbReference>
<dbReference type="FunFam" id="2.60.220.30:FF:000003">
    <property type="entry name" value="Unc-5 netrin receptor C"/>
    <property type="match status" value="1"/>
</dbReference>
<dbReference type="FunFam" id="2.60.40.10:FF:000037">
    <property type="entry name" value="Unc-5 netrin receptor C"/>
    <property type="match status" value="1"/>
</dbReference>
<dbReference type="FunFam" id="2.60.40.10:FF:000039">
    <property type="entry name" value="Unc-5 netrin receptor C"/>
    <property type="match status" value="1"/>
</dbReference>
<dbReference type="Gene3D" id="2.60.220.30">
    <property type="match status" value="1"/>
</dbReference>
<dbReference type="Gene3D" id="1.10.533.10">
    <property type="entry name" value="Death Domain, Fas"/>
    <property type="match status" value="1"/>
</dbReference>
<dbReference type="Gene3D" id="2.60.40.10">
    <property type="entry name" value="Immunoglobulins"/>
    <property type="match status" value="2"/>
</dbReference>
<dbReference type="Gene3D" id="2.20.100.10">
    <property type="entry name" value="Thrombospondin type-1 (TSP1) repeat"/>
    <property type="match status" value="1"/>
</dbReference>
<dbReference type="InterPro" id="IPR011029">
    <property type="entry name" value="DEATH-like_dom_sf"/>
</dbReference>
<dbReference type="InterPro" id="IPR000488">
    <property type="entry name" value="Death_dom"/>
</dbReference>
<dbReference type="InterPro" id="IPR042155">
    <property type="entry name" value="Death_UNC5A"/>
</dbReference>
<dbReference type="InterPro" id="IPR007110">
    <property type="entry name" value="Ig-like_dom"/>
</dbReference>
<dbReference type="InterPro" id="IPR036179">
    <property type="entry name" value="Ig-like_dom_sf"/>
</dbReference>
<dbReference type="InterPro" id="IPR013783">
    <property type="entry name" value="Ig-like_fold"/>
</dbReference>
<dbReference type="InterPro" id="IPR013098">
    <property type="entry name" value="Ig_I-set"/>
</dbReference>
<dbReference type="InterPro" id="IPR003599">
    <property type="entry name" value="Ig_sub"/>
</dbReference>
<dbReference type="InterPro" id="IPR000884">
    <property type="entry name" value="TSP1_rpt"/>
</dbReference>
<dbReference type="InterPro" id="IPR036383">
    <property type="entry name" value="TSP1_rpt_sf"/>
</dbReference>
<dbReference type="InterPro" id="IPR037936">
    <property type="entry name" value="UNC5"/>
</dbReference>
<dbReference type="InterPro" id="IPR033772">
    <property type="entry name" value="UPA"/>
</dbReference>
<dbReference type="InterPro" id="IPR000906">
    <property type="entry name" value="ZU5_dom"/>
</dbReference>
<dbReference type="PANTHER" id="PTHR12582">
    <property type="entry name" value="NETRIN RECEPTOR UNC5"/>
    <property type="match status" value="1"/>
</dbReference>
<dbReference type="PANTHER" id="PTHR12582:SF4">
    <property type="entry name" value="NETRIN RECEPTOR UNC5A"/>
    <property type="match status" value="1"/>
</dbReference>
<dbReference type="Pfam" id="PF00531">
    <property type="entry name" value="Death"/>
    <property type="match status" value="1"/>
</dbReference>
<dbReference type="Pfam" id="PF07679">
    <property type="entry name" value="I-set"/>
    <property type="match status" value="1"/>
</dbReference>
<dbReference type="Pfam" id="PF17217">
    <property type="entry name" value="UPA"/>
    <property type="match status" value="1"/>
</dbReference>
<dbReference type="Pfam" id="PF00791">
    <property type="entry name" value="ZU5"/>
    <property type="match status" value="1"/>
</dbReference>
<dbReference type="SMART" id="SM00005">
    <property type="entry name" value="DEATH"/>
    <property type="match status" value="1"/>
</dbReference>
<dbReference type="SMART" id="SM00409">
    <property type="entry name" value="IG"/>
    <property type="match status" value="1"/>
</dbReference>
<dbReference type="SMART" id="SM00209">
    <property type="entry name" value="TSP1"/>
    <property type="match status" value="1"/>
</dbReference>
<dbReference type="SMART" id="SM00218">
    <property type="entry name" value="ZU5"/>
    <property type="match status" value="1"/>
</dbReference>
<dbReference type="SUPFAM" id="SSF47986">
    <property type="entry name" value="DEATH domain"/>
    <property type="match status" value="1"/>
</dbReference>
<dbReference type="SUPFAM" id="SSF48726">
    <property type="entry name" value="Immunoglobulin"/>
    <property type="match status" value="2"/>
</dbReference>
<dbReference type="SUPFAM" id="SSF82895">
    <property type="entry name" value="TSP-1 type 1 repeat"/>
    <property type="match status" value="1"/>
</dbReference>
<dbReference type="PROSITE" id="PS50835">
    <property type="entry name" value="IG_LIKE"/>
    <property type="match status" value="1"/>
</dbReference>
<dbReference type="PROSITE" id="PS50092">
    <property type="entry name" value="TSP1"/>
    <property type="match status" value="1"/>
</dbReference>
<dbReference type="PROSITE" id="PS51145">
    <property type="entry name" value="ZU5"/>
    <property type="match status" value="1"/>
</dbReference>
<name>UNC5A_HUMAN</name>
<reference key="1">
    <citation type="journal article" date="2004" name="Nat. Genet.">
        <title>Complete sequencing and characterization of 21,243 full-length human cDNAs.</title>
        <authorList>
            <person name="Ota T."/>
            <person name="Suzuki Y."/>
            <person name="Nishikawa T."/>
            <person name="Otsuki T."/>
            <person name="Sugiyama T."/>
            <person name="Irie R."/>
            <person name="Wakamatsu A."/>
            <person name="Hayashi K."/>
            <person name="Sato H."/>
            <person name="Nagai K."/>
            <person name="Kimura K."/>
            <person name="Makita H."/>
            <person name="Sekine M."/>
            <person name="Obayashi M."/>
            <person name="Nishi T."/>
            <person name="Shibahara T."/>
            <person name="Tanaka T."/>
            <person name="Ishii S."/>
            <person name="Yamamoto J."/>
            <person name="Saito K."/>
            <person name="Kawai Y."/>
            <person name="Isono Y."/>
            <person name="Nakamura Y."/>
            <person name="Nagahari K."/>
            <person name="Murakami K."/>
            <person name="Yasuda T."/>
            <person name="Iwayanagi T."/>
            <person name="Wagatsuma M."/>
            <person name="Shiratori A."/>
            <person name="Sudo H."/>
            <person name="Hosoiri T."/>
            <person name="Kaku Y."/>
            <person name="Kodaira H."/>
            <person name="Kondo H."/>
            <person name="Sugawara M."/>
            <person name="Takahashi M."/>
            <person name="Kanda K."/>
            <person name="Yokoi T."/>
            <person name="Furuya T."/>
            <person name="Kikkawa E."/>
            <person name="Omura Y."/>
            <person name="Abe K."/>
            <person name="Kamihara K."/>
            <person name="Katsuta N."/>
            <person name="Sato K."/>
            <person name="Tanikawa M."/>
            <person name="Yamazaki M."/>
            <person name="Ninomiya K."/>
            <person name="Ishibashi T."/>
            <person name="Yamashita H."/>
            <person name="Murakawa K."/>
            <person name="Fujimori K."/>
            <person name="Tanai H."/>
            <person name="Kimata M."/>
            <person name="Watanabe M."/>
            <person name="Hiraoka S."/>
            <person name="Chiba Y."/>
            <person name="Ishida S."/>
            <person name="Ono Y."/>
            <person name="Takiguchi S."/>
            <person name="Watanabe S."/>
            <person name="Yosida M."/>
            <person name="Hotuta T."/>
            <person name="Kusano J."/>
            <person name="Kanehori K."/>
            <person name="Takahashi-Fujii A."/>
            <person name="Hara H."/>
            <person name="Tanase T.-O."/>
            <person name="Nomura Y."/>
            <person name="Togiya S."/>
            <person name="Komai F."/>
            <person name="Hara R."/>
            <person name="Takeuchi K."/>
            <person name="Arita M."/>
            <person name="Imose N."/>
            <person name="Musashino K."/>
            <person name="Yuuki H."/>
            <person name="Oshima A."/>
            <person name="Sasaki N."/>
            <person name="Aotsuka S."/>
            <person name="Yoshikawa Y."/>
            <person name="Matsunawa H."/>
            <person name="Ichihara T."/>
            <person name="Shiohata N."/>
            <person name="Sano S."/>
            <person name="Moriya S."/>
            <person name="Momiyama H."/>
            <person name="Satoh N."/>
            <person name="Takami S."/>
            <person name="Terashima Y."/>
            <person name="Suzuki O."/>
            <person name="Nakagawa S."/>
            <person name="Senoh A."/>
            <person name="Mizoguchi H."/>
            <person name="Goto Y."/>
            <person name="Shimizu F."/>
            <person name="Wakebe H."/>
            <person name="Hishigaki H."/>
            <person name="Watanabe T."/>
            <person name="Sugiyama A."/>
            <person name="Takemoto M."/>
            <person name="Kawakami B."/>
            <person name="Yamazaki M."/>
            <person name="Watanabe K."/>
            <person name="Kumagai A."/>
            <person name="Itakura S."/>
            <person name="Fukuzumi Y."/>
            <person name="Fujimori Y."/>
            <person name="Komiyama M."/>
            <person name="Tashiro H."/>
            <person name="Tanigami A."/>
            <person name="Fujiwara T."/>
            <person name="Ono T."/>
            <person name="Yamada K."/>
            <person name="Fujii Y."/>
            <person name="Ozaki K."/>
            <person name="Hirao M."/>
            <person name="Ohmori Y."/>
            <person name="Kawabata A."/>
            <person name="Hikiji T."/>
            <person name="Kobatake N."/>
            <person name="Inagaki H."/>
            <person name="Ikema Y."/>
            <person name="Okamoto S."/>
            <person name="Okitani R."/>
            <person name="Kawakami T."/>
            <person name="Noguchi S."/>
            <person name="Itoh T."/>
            <person name="Shigeta K."/>
            <person name="Senba T."/>
            <person name="Matsumura K."/>
            <person name="Nakajima Y."/>
            <person name="Mizuno T."/>
            <person name="Morinaga M."/>
            <person name="Sasaki M."/>
            <person name="Togashi T."/>
            <person name="Oyama M."/>
            <person name="Hata H."/>
            <person name="Watanabe M."/>
            <person name="Komatsu T."/>
            <person name="Mizushima-Sugano J."/>
            <person name="Satoh T."/>
            <person name="Shirai Y."/>
            <person name="Takahashi Y."/>
            <person name="Nakagawa K."/>
            <person name="Okumura K."/>
            <person name="Nagase T."/>
            <person name="Nomura N."/>
            <person name="Kikuchi H."/>
            <person name="Masuho Y."/>
            <person name="Yamashita R."/>
            <person name="Nakai K."/>
            <person name="Yada T."/>
            <person name="Nakamura Y."/>
            <person name="Ohara O."/>
            <person name="Isogai T."/>
            <person name="Sugano S."/>
        </authorList>
    </citation>
    <scope>NUCLEOTIDE SEQUENCE [LARGE SCALE MRNA] (ISOFORM 2)</scope>
    <source>
        <tissue>Brain</tissue>
    </source>
</reference>
<reference key="2">
    <citation type="journal article" date="2004" name="Nature">
        <title>The DNA sequence and comparative analysis of human chromosome 5.</title>
        <authorList>
            <person name="Schmutz J."/>
            <person name="Martin J."/>
            <person name="Terry A."/>
            <person name="Couronne O."/>
            <person name="Grimwood J."/>
            <person name="Lowry S."/>
            <person name="Gordon L.A."/>
            <person name="Scott D."/>
            <person name="Xie G."/>
            <person name="Huang W."/>
            <person name="Hellsten U."/>
            <person name="Tran-Gyamfi M."/>
            <person name="She X."/>
            <person name="Prabhakar S."/>
            <person name="Aerts A."/>
            <person name="Altherr M."/>
            <person name="Bajorek E."/>
            <person name="Black S."/>
            <person name="Branscomb E."/>
            <person name="Caoile C."/>
            <person name="Challacombe J.F."/>
            <person name="Chan Y.M."/>
            <person name="Denys M."/>
            <person name="Detter J.C."/>
            <person name="Escobar J."/>
            <person name="Flowers D."/>
            <person name="Fotopulos D."/>
            <person name="Glavina T."/>
            <person name="Gomez M."/>
            <person name="Gonzales E."/>
            <person name="Goodstein D."/>
            <person name="Grigoriev I."/>
            <person name="Groza M."/>
            <person name="Hammon N."/>
            <person name="Hawkins T."/>
            <person name="Haydu L."/>
            <person name="Israni S."/>
            <person name="Jett J."/>
            <person name="Kadner K."/>
            <person name="Kimball H."/>
            <person name="Kobayashi A."/>
            <person name="Lopez F."/>
            <person name="Lou Y."/>
            <person name="Martinez D."/>
            <person name="Medina C."/>
            <person name="Morgan J."/>
            <person name="Nandkeshwar R."/>
            <person name="Noonan J.P."/>
            <person name="Pitluck S."/>
            <person name="Pollard M."/>
            <person name="Predki P."/>
            <person name="Priest J."/>
            <person name="Ramirez L."/>
            <person name="Retterer J."/>
            <person name="Rodriguez A."/>
            <person name="Rogers S."/>
            <person name="Salamov A."/>
            <person name="Salazar A."/>
            <person name="Thayer N."/>
            <person name="Tice H."/>
            <person name="Tsai M."/>
            <person name="Ustaszewska A."/>
            <person name="Vo N."/>
            <person name="Wheeler J."/>
            <person name="Wu K."/>
            <person name="Yang J."/>
            <person name="Dickson M."/>
            <person name="Cheng J.-F."/>
            <person name="Eichler E.E."/>
            <person name="Olsen A."/>
            <person name="Pennacchio L.A."/>
            <person name="Rokhsar D.S."/>
            <person name="Richardson P."/>
            <person name="Lucas S.M."/>
            <person name="Myers R.M."/>
            <person name="Rubin E.M."/>
        </authorList>
    </citation>
    <scope>NUCLEOTIDE SEQUENCE [LARGE SCALE GENOMIC DNA]</scope>
</reference>
<reference key="3">
    <citation type="journal article" date="2004" name="Genome Res.">
        <title>The status, quality, and expansion of the NIH full-length cDNA project: the Mammalian Gene Collection (MGC).</title>
        <authorList>
            <consortium name="The MGC Project Team"/>
        </authorList>
    </citation>
    <scope>NUCLEOTIDE SEQUENCE [LARGE SCALE MRNA] (ISOFORM 1)</scope>
    <scope>NUCLEOTIDE SEQUENCE [LARGE SCALE MRNA] OF 1-404 (ISOFORM 3)</scope>
    <scope>NUCLEOTIDE SEQUENCE [LARGE SCALE MRNA] OF 302-842 (ISOFORMS 1/2/3)</scope>
    <source>
        <tissue>Brain</tissue>
    </source>
</reference>
<reference key="4">
    <citation type="journal article" date="2001" name="DNA Res.">
        <title>Prediction of the coding sequences of unidentified human genes. XXII. The complete sequences of 50 new cDNA clones which code for large proteins.</title>
        <authorList>
            <person name="Nagase T."/>
            <person name="Kikuno R."/>
            <person name="Ohara O."/>
        </authorList>
    </citation>
    <scope>NUCLEOTIDE SEQUENCE [LARGE SCALE MRNA] OF 624-728</scope>
    <source>
        <tissue>Brain</tissue>
    </source>
</reference>
<reference key="5">
    <citation type="journal article" date="2003" name="Nat. Cell Biol.">
        <title>p53RDL1 regulates of p53-dependent apoptosis.</title>
        <authorList>
            <person name="Tanikawa C."/>
            <person name="Matsuda K."/>
            <person name="Fukuda S."/>
            <person name="Nakamura Y."/>
            <person name="Arakawa H."/>
        </authorList>
    </citation>
    <scope>INDUCTION</scope>
</reference>
<reference key="6">
    <citation type="journal article" date="2003" name="Proc. Natl. Acad. Sci. U.S.A.">
        <title>The netrin-1 receptors UNC5H are putative tumor suppressors controlling cell death commitment.</title>
        <authorList>
            <person name="Thiebault K."/>
            <person name="Mazelin L."/>
            <person name="Pays L."/>
            <person name="Llambi F."/>
            <person name="Joly M.-O."/>
            <person name="Scoazec J.-Y."/>
            <person name="Saurin J.-C."/>
            <person name="Romeo G."/>
            <person name="Mehlen P."/>
        </authorList>
    </citation>
    <scope>DOWN-REGULATION IN CANCER</scope>
</reference>
<reference key="7">
    <citation type="journal article" date="2014" name="Neuron">
        <title>FLRT structure: balancing repulsion and cell adhesion in cortical and vascular development.</title>
        <authorList>
            <person name="Seiradake E."/>
            <person name="del Toro D."/>
            <person name="Nagel D."/>
            <person name="Cop F."/>
            <person name="Haertl R."/>
            <person name="Ruff T."/>
            <person name="Seyit-Bremer G."/>
            <person name="Harlos K."/>
            <person name="Border E.C."/>
            <person name="Acker-Palmer A."/>
            <person name="Jones E.Y."/>
            <person name="Klein R."/>
        </authorList>
    </citation>
    <scope>X-RAY CRYSTALLOGRAPHY (2.40 ANGSTROMS) OF 1-303</scope>
    <scope>DISULFIDE BONDS</scope>
    <scope>GLYCOSYLATION AT ASN-218</scope>
    <scope>INTERACTION WITH FLRT2</scope>
</reference>
<keyword id="KW-0002">3D-structure</keyword>
<keyword id="KW-0025">Alternative splicing</keyword>
<keyword id="KW-0053">Apoptosis</keyword>
<keyword id="KW-1003">Cell membrane</keyword>
<keyword id="KW-0966">Cell projection</keyword>
<keyword id="KW-0217">Developmental protein</keyword>
<keyword id="KW-1015">Disulfide bond</keyword>
<keyword id="KW-0325">Glycoprotein</keyword>
<keyword id="KW-0393">Immunoglobulin domain</keyword>
<keyword id="KW-0472">Membrane</keyword>
<keyword id="KW-0597">Phosphoprotein</keyword>
<keyword id="KW-1267">Proteomics identification</keyword>
<keyword id="KW-0675">Receptor</keyword>
<keyword id="KW-1185">Reference proteome</keyword>
<keyword id="KW-0732">Signal</keyword>
<keyword id="KW-0812">Transmembrane</keyword>
<keyword id="KW-1133">Transmembrane helix</keyword>
<feature type="signal peptide" evidence="4">
    <location>
        <begin position="1"/>
        <end position="25"/>
    </location>
</feature>
<feature type="chain" id="PRO_0000036068" description="Netrin receptor UNC5A">
    <location>
        <begin position="26"/>
        <end position="842"/>
    </location>
</feature>
<feature type="topological domain" description="Extracellular" evidence="4">
    <location>
        <begin position="26"/>
        <end position="306"/>
    </location>
</feature>
<feature type="transmembrane region" description="Helical" evidence="4">
    <location>
        <begin position="307"/>
        <end position="327"/>
    </location>
</feature>
<feature type="topological domain" description="Cytoplasmic" evidence="4">
    <location>
        <begin position="328"/>
        <end position="842"/>
    </location>
</feature>
<feature type="domain" description="Ig-like">
    <location>
        <begin position="44"/>
        <end position="141"/>
    </location>
</feature>
<feature type="domain" description="Ig-like C2-type">
    <location>
        <begin position="155"/>
        <end position="234"/>
    </location>
</feature>
<feature type="domain" description="TSP type-1" evidence="5">
    <location>
        <begin position="242"/>
        <end position="294"/>
    </location>
</feature>
<feature type="domain" description="ZU5" evidence="6">
    <location>
        <begin position="441"/>
        <end position="584"/>
    </location>
</feature>
<feature type="domain" description="Death">
    <location>
        <begin position="761"/>
        <end position="841"/>
    </location>
</feature>
<feature type="region of interest" description="Interaction with DCC" evidence="1">
    <location>
        <begin position="605"/>
        <end position="623"/>
    </location>
</feature>
<feature type="site" description="Cleavage; by caspase-3" evidence="2">
    <location>
        <begin position="340"/>
        <end position="341"/>
    </location>
</feature>
<feature type="glycosylation site" description="N-linked (GlcNAc...) asparagine" evidence="4">
    <location>
        <position position="107"/>
    </location>
</feature>
<feature type="glycosylation site" description="N-linked (GlcNAc...) asparagine" evidence="4 13">
    <location>
        <position position="218"/>
    </location>
</feature>
<feature type="glycosylation site" description="C-linked (Man) tryptophan" evidence="3">
    <location>
        <position position="245"/>
    </location>
</feature>
<feature type="glycosylation site" description="C-linked (Man) tryptophan" evidence="3">
    <location>
        <position position="248"/>
    </location>
</feature>
<feature type="glycosylation site" description="C-linked (Man) tryptophan" evidence="3">
    <location>
        <position position="251"/>
    </location>
</feature>
<feature type="glycosylation site" description="N-linked (GlcNAc...) asparagine" evidence="4">
    <location>
        <position position="287"/>
    </location>
</feature>
<feature type="disulfide bond" evidence="13">
    <location>
        <begin position="65"/>
        <end position="126"/>
    </location>
</feature>
<feature type="disulfide bond" evidence="13">
    <location>
        <begin position="77"/>
        <end position="124"/>
    </location>
</feature>
<feature type="disulfide bond" evidence="13">
    <location>
        <begin position="170"/>
        <end position="221"/>
    </location>
</feature>
<feature type="disulfide bond" evidence="13">
    <location>
        <begin position="254"/>
        <end position="288"/>
    </location>
</feature>
<feature type="disulfide bond" evidence="13">
    <location>
        <begin position="258"/>
        <end position="293"/>
    </location>
</feature>
<feature type="disulfide bond" evidence="13">
    <location>
        <begin position="266"/>
        <end position="278"/>
    </location>
</feature>
<feature type="splice variant" id="VSP_011693" description="In isoform 3." evidence="11">
    <original>MAVRPGLWPALLGIVLAAWLRGSGAQQSATVANPVPGANPDLLPHFLVEPEDVYIVKNKPVLLVCKAVPATQIFFKCNGEWVRQVDHVIERSTDGSS</original>
    <variation>MAGTSERSLISSISQPKAIECFEVKKKAFLTHGRYHGSGATPPKTKDPKPETFCGQT</variation>
    <location>
        <begin position="1"/>
        <end position="97"/>
    </location>
</feature>
<feature type="splice variant" id="VSP_011694" description="In isoform 2." evidence="10">
    <original>TASGPE</original>
    <variation>SESSLP</variation>
    <location>
        <begin position="296"/>
        <end position="301"/>
    </location>
</feature>
<feature type="splice variant" id="VSP_011695" description="In isoform 2." evidence="10">
    <location>
        <begin position="302"/>
        <end position="842"/>
    </location>
</feature>
<feature type="sequence conflict" description="In Ref. 1; BAD18531." evidence="12" ref="1">
    <original>S</original>
    <variation>N</variation>
    <location>
        <position position="97"/>
    </location>
</feature>
<feature type="strand" evidence="14">
    <location>
        <begin position="45"/>
        <end position="48"/>
    </location>
</feature>
<feature type="strand" evidence="14">
    <location>
        <begin position="61"/>
        <end position="69"/>
    </location>
</feature>
<feature type="strand" evidence="14">
    <location>
        <begin position="71"/>
        <end position="77"/>
    </location>
</feature>
<feature type="turn" evidence="14">
    <location>
        <begin position="84"/>
        <end position="86"/>
    </location>
</feature>
<feature type="strand" evidence="14">
    <location>
        <begin position="88"/>
        <end position="93"/>
    </location>
</feature>
<feature type="strand" evidence="14">
    <location>
        <begin position="95"/>
        <end position="98"/>
    </location>
</feature>
<feature type="strand" evidence="14">
    <location>
        <begin position="100"/>
        <end position="108"/>
    </location>
</feature>
<feature type="helix" evidence="14">
    <location>
        <begin position="110"/>
        <end position="115"/>
    </location>
</feature>
<feature type="strand" evidence="14">
    <location>
        <begin position="118"/>
        <end position="120"/>
    </location>
</feature>
<feature type="strand" evidence="14">
    <location>
        <begin position="123"/>
        <end position="129"/>
    </location>
</feature>
<feature type="strand" evidence="14">
    <location>
        <begin position="134"/>
        <end position="136"/>
    </location>
</feature>
<feature type="strand" evidence="14">
    <location>
        <begin position="158"/>
        <end position="163"/>
    </location>
</feature>
<feature type="strand" evidence="14">
    <location>
        <begin position="166"/>
        <end position="168"/>
    </location>
</feature>
<feature type="strand" evidence="14">
    <location>
        <begin position="180"/>
        <end position="185"/>
    </location>
</feature>
<feature type="turn" evidence="14">
    <location>
        <begin position="192"/>
        <end position="194"/>
    </location>
</feature>
<feature type="strand" evidence="14">
    <location>
        <begin position="196"/>
        <end position="200"/>
    </location>
</feature>
<feature type="strand" evidence="14">
    <location>
        <begin position="206"/>
        <end position="208"/>
    </location>
</feature>
<feature type="strand" evidence="14">
    <location>
        <begin position="211"/>
        <end position="214"/>
    </location>
</feature>
<feature type="strand" evidence="14">
    <location>
        <begin position="216"/>
        <end position="224"/>
    </location>
</feature>
<feature type="strand" evidence="14">
    <location>
        <begin position="229"/>
        <end position="231"/>
    </location>
</feature>
<feature type="strand" evidence="14">
    <location>
        <begin position="235"/>
        <end position="241"/>
    </location>
</feature>
<feature type="helix" evidence="14">
    <location>
        <begin position="256"/>
        <end position="258"/>
    </location>
</feature>
<feature type="strand" evidence="14">
    <location>
        <begin position="259"/>
        <end position="263"/>
    </location>
</feature>
<feature type="strand" evidence="14">
    <location>
        <begin position="282"/>
        <end position="287"/>
    </location>
</feature>
<protein>
    <recommendedName>
        <fullName>Netrin receptor UNC5A</fullName>
    </recommendedName>
    <alternativeName>
        <fullName>Protein unc-5 homolog 1</fullName>
    </alternativeName>
    <alternativeName>
        <fullName>Protein unc-5 homolog A</fullName>
    </alternativeName>
</protein>
<sequence>MAVRPGLWPALLGIVLAAWLRGSGAQQSATVANPVPGANPDLLPHFLVEPEDVYIVKNKPVLLVCKAVPATQIFFKCNGEWVRQVDHVIERSTDGSSGLPTMEVRINVSRQQVEKVFGLEEYWCQCVAWSSSGTTKSQKAYIRIAYLRKNFEQEPLAKEVSLEQGIVLPCRPPEGIPPAEVEWLRNEDLVDPSLDPNVYITREHSLVVRQARLADTANYTCVAKNIVARRRSASAAVIVYVDGSWSPWSKWSACGLDCTHWRSRECSDPAPRNGGEECQGTDLDTRNCTSDLCVHTASGPEDVALYVGLIAVAVCLVLLLLVLILVYCRKKEGLDSDVADSSILTSGFQPVSIKPSKADNPHLLTIQPDLSTTTTTYQGSLCPRQDGPSPKFQLTNGHLLSPLGGGRHTLHHSSPTSEAEEFVSRLSTQNYFRSLPRGTSNMTYGTFNFLGGRLMIPNTGISLLIPPDAIPRGKIYEIYLTLHKPEDVRLPLAGCQTLLSPIVSCGPPGVLLTRPVILAMDHCGEPSPDSWSLRLKKQSCEGSWEDVLHLGEEAPSHLYYCQLEASACYVFTEQLGRFALVGEALSVAAAKRLKLLLFAPVACTSLEYNIRVYCLHDTHDALKEVVQLEKQLGGQLIQEPRVLHFKDSYHNLRLSIHDVPSSLWKSKLLVSYQEIPFYHIWNGTQRYLHCTFTLERVSPSTSDLACKLWVWQVEGDGQSFSINFNITKDTRFAELLALESEAGVPALVGPSAFKIPFLIRQKIISSLDPPCRRGADWRTLAQKLHLDSHLSFFASKPSPTAMILNLWEARHFPNGNLSQLAAAVAGLGQPDAGLFTVSEAEC</sequence>
<gene>
    <name type="primary">UNC5A</name>
    <name type="synonym">KIAA1976</name>
    <name type="synonym">UNC5H1</name>
</gene>